<dbReference type="EC" id="3.6.4.-" evidence="1"/>
<dbReference type="EMBL" id="AM181176">
    <property type="protein sequence ID" value="CAY47606.1"/>
    <property type="molecule type" value="Genomic_DNA"/>
</dbReference>
<dbReference type="RefSeq" id="WP_012722659.1">
    <property type="nucleotide sequence ID" value="NC_012660.1"/>
</dbReference>
<dbReference type="SMR" id="C3K902"/>
<dbReference type="STRING" id="294.SRM1_01274"/>
<dbReference type="GeneID" id="93462968"/>
<dbReference type="PATRIC" id="fig|216595.4.peg.1582"/>
<dbReference type="eggNOG" id="COG0553">
    <property type="taxonomic scope" value="Bacteria"/>
</dbReference>
<dbReference type="HOGENOM" id="CLU_011520_0_0_6"/>
<dbReference type="OrthoDB" id="9814088at2"/>
<dbReference type="GO" id="GO:0005524">
    <property type="term" value="F:ATP binding"/>
    <property type="evidence" value="ECO:0007669"/>
    <property type="project" value="UniProtKB-UniRule"/>
</dbReference>
<dbReference type="GO" id="GO:0003677">
    <property type="term" value="F:DNA binding"/>
    <property type="evidence" value="ECO:0007669"/>
    <property type="project" value="UniProtKB-KW"/>
</dbReference>
<dbReference type="GO" id="GO:0004386">
    <property type="term" value="F:helicase activity"/>
    <property type="evidence" value="ECO:0007669"/>
    <property type="project" value="UniProtKB-UniRule"/>
</dbReference>
<dbReference type="GO" id="GO:0016817">
    <property type="term" value="F:hydrolase activity, acting on acid anhydrides"/>
    <property type="evidence" value="ECO:0007669"/>
    <property type="project" value="InterPro"/>
</dbReference>
<dbReference type="GO" id="GO:0006355">
    <property type="term" value="P:regulation of DNA-templated transcription"/>
    <property type="evidence" value="ECO:0007669"/>
    <property type="project" value="UniProtKB-UniRule"/>
</dbReference>
<dbReference type="CDD" id="cd18011">
    <property type="entry name" value="DEXDc_RapA"/>
    <property type="match status" value="1"/>
</dbReference>
<dbReference type="CDD" id="cd18793">
    <property type="entry name" value="SF2_C_SNF"/>
    <property type="match status" value="1"/>
</dbReference>
<dbReference type="Gene3D" id="2.30.30.140">
    <property type="match status" value="1"/>
</dbReference>
<dbReference type="Gene3D" id="2.30.30.930">
    <property type="match status" value="1"/>
</dbReference>
<dbReference type="Gene3D" id="3.30.360.80">
    <property type="match status" value="1"/>
</dbReference>
<dbReference type="Gene3D" id="6.10.140.1500">
    <property type="match status" value="1"/>
</dbReference>
<dbReference type="Gene3D" id="6.10.140.2230">
    <property type="match status" value="1"/>
</dbReference>
<dbReference type="Gene3D" id="3.40.50.300">
    <property type="entry name" value="P-loop containing nucleotide triphosphate hydrolases"/>
    <property type="match status" value="1"/>
</dbReference>
<dbReference type="Gene3D" id="3.40.50.10810">
    <property type="entry name" value="Tandem AAA-ATPase domain"/>
    <property type="match status" value="1"/>
</dbReference>
<dbReference type="HAMAP" id="MF_01821">
    <property type="entry name" value="Helicase_RapA"/>
    <property type="match status" value="1"/>
</dbReference>
<dbReference type="InterPro" id="IPR014001">
    <property type="entry name" value="Helicase_ATP-bd"/>
</dbReference>
<dbReference type="InterPro" id="IPR001650">
    <property type="entry name" value="Helicase_C-like"/>
</dbReference>
<dbReference type="InterPro" id="IPR023949">
    <property type="entry name" value="Helicase_RapA"/>
</dbReference>
<dbReference type="InterPro" id="IPR027417">
    <property type="entry name" value="P-loop_NTPase"/>
</dbReference>
<dbReference type="InterPro" id="IPR022737">
    <property type="entry name" value="RapA_C"/>
</dbReference>
<dbReference type="InterPro" id="IPR038718">
    <property type="entry name" value="SNF2-like_sf"/>
</dbReference>
<dbReference type="InterPro" id="IPR049730">
    <property type="entry name" value="SNF2/RAD54-like_C"/>
</dbReference>
<dbReference type="InterPro" id="IPR000330">
    <property type="entry name" value="SNF2_N"/>
</dbReference>
<dbReference type="InterPro" id="IPR040765">
    <property type="entry name" value="Tudor_1_RapA"/>
</dbReference>
<dbReference type="InterPro" id="IPR040766">
    <property type="entry name" value="Tudor_2_RapA"/>
</dbReference>
<dbReference type="NCBIfam" id="NF003426">
    <property type="entry name" value="PRK04914.1"/>
    <property type="match status" value="1"/>
</dbReference>
<dbReference type="PANTHER" id="PTHR45766">
    <property type="entry name" value="DNA ANNEALING HELICASE AND ENDONUCLEASE ZRANB3 FAMILY MEMBER"/>
    <property type="match status" value="1"/>
</dbReference>
<dbReference type="PANTHER" id="PTHR45766:SF6">
    <property type="entry name" value="SWI_SNF-RELATED MATRIX-ASSOCIATED ACTIN-DEPENDENT REGULATOR OF CHROMATIN SUBFAMILY A-LIKE PROTEIN 1"/>
    <property type="match status" value="1"/>
</dbReference>
<dbReference type="Pfam" id="PF00271">
    <property type="entry name" value="Helicase_C"/>
    <property type="match status" value="1"/>
</dbReference>
<dbReference type="Pfam" id="PF12137">
    <property type="entry name" value="RapA_C"/>
    <property type="match status" value="1"/>
</dbReference>
<dbReference type="Pfam" id="PF00176">
    <property type="entry name" value="SNF2-rel_dom"/>
    <property type="match status" value="1"/>
</dbReference>
<dbReference type="Pfam" id="PF18339">
    <property type="entry name" value="Tudor_1_RapA"/>
    <property type="match status" value="1"/>
</dbReference>
<dbReference type="Pfam" id="PF18337">
    <property type="entry name" value="Tudor_RapA"/>
    <property type="match status" value="1"/>
</dbReference>
<dbReference type="SMART" id="SM00487">
    <property type="entry name" value="DEXDc"/>
    <property type="match status" value="1"/>
</dbReference>
<dbReference type="SMART" id="SM00490">
    <property type="entry name" value="HELICc"/>
    <property type="match status" value="1"/>
</dbReference>
<dbReference type="SUPFAM" id="SSF52540">
    <property type="entry name" value="P-loop containing nucleoside triphosphate hydrolases"/>
    <property type="match status" value="2"/>
</dbReference>
<dbReference type="PROSITE" id="PS51192">
    <property type="entry name" value="HELICASE_ATP_BIND_1"/>
    <property type="match status" value="1"/>
</dbReference>
<dbReference type="PROSITE" id="PS51194">
    <property type="entry name" value="HELICASE_CTER"/>
    <property type="match status" value="1"/>
</dbReference>
<accession>C3K902</accession>
<protein>
    <recommendedName>
        <fullName evidence="1">RNA polymerase-associated protein RapA</fullName>
        <ecNumber evidence="1">3.6.4.-</ecNumber>
    </recommendedName>
    <alternativeName>
        <fullName evidence="1">ATP-dependent helicase HepA</fullName>
    </alternativeName>
</protein>
<proteinExistence type="inferred from homology"/>
<organism>
    <name type="scientific">Pseudomonas fluorescens (strain SBW25)</name>
    <dbReference type="NCBI Taxonomy" id="216595"/>
    <lineage>
        <taxon>Bacteria</taxon>
        <taxon>Pseudomonadati</taxon>
        <taxon>Pseudomonadota</taxon>
        <taxon>Gammaproteobacteria</taxon>
        <taxon>Pseudomonadales</taxon>
        <taxon>Pseudomonadaceae</taxon>
        <taxon>Pseudomonas</taxon>
    </lineage>
</organism>
<comment type="function">
    <text evidence="1">Transcription regulator that activates transcription by stimulating RNA polymerase (RNAP) recycling in case of stress conditions such as supercoiled DNA or high salt concentrations. Probably acts by releasing the RNAP, when it is trapped or immobilized on tightly supercoiled DNA. Does not activate transcription on linear DNA. Probably not involved in DNA repair.</text>
</comment>
<comment type="subunit">
    <text evidence="1">Interacts with the RNAP. Has a higher affinity for the core RNAP than for the holoenzyme. Its ATPase activity is stimulated by binding to RNAP.</text>
</comment>
<comment type="similarity">
    <text evidence="1">Belongs to the SNF2/RAD54 helicase family. RapA subfamily.</text>
</comment>
<evidence type="ECO:0000255" key="1">
    <source>
        <dbReference type="HAMAP-Rule" id="MF_01821"/>
    </source>
</evidence>
<reference key="1">
    <citation type="journal article" date="2009" name="Genome Biol.">
        <title>Genomic and genetic analyses of diversity and plant interactions of Pseudomonas fluorescens.</title>
        <authorList>
            <person name="Silby M.W."/>
            <person name="Cerdeno-Tarraga A.M."/>
            <person name="Vernikos G.S."/>
            <person name="Giddens S.R."/>
            <person name="Jackson R.W."/>
            <person name="Preston G.M."/>
            <person name="Zhang X.-X."/>
            <person name="Moon C.D."/>
            <person name="Gehrig S.M."/>
            <person name="Godfrey S.A.C."/>
            <person name="Knight C.G."/>
            <person name="Malone J.G."/>
            <person name="Robinson Z."/>
            <person name="Spiers A.J."/>
            <person name="Harris S."/>
            <person name="Challis G.L."/>
            <person name="Yaxley A.M."/>
            <person name="Harris D."/>
            <person name="Seeger K."/>
            <person name="Murphy L."/>
            <person name="Rutter S."/>
            <person name="Squares R."/>
            <person name="Quail M.A."/>
            <person name="Saunders E."/>
            <person name="Mavromatis K."/>
            <person name="Brettin T.S."/>
            <person name="Bentley S.D."/>
            <person name="Hothersall J."/>
            <person name="Stephens E."/>
            <person name="Thomas C.M."/>
            <person name="Parkhill J."/>
            <person name="Levy S.B."/>
            <person name="Rainey P.B."/>
            <person name="Thomson N.R."/>
        </authorList>
    </citation>
    <scope>NUCLEOTIDE SEQUENCE [LARGE SCALE GENOMIC DNA]</scope>
    <source>
        <strain>SBW25</strain>
    </source>
</reference>
<gene>
    <name evidence="1" type="primary">rapA</name>
    <name type="ordered locus">PFLU_1352</name>
</gene>
<sequence>MAQQYQPGQRWISDSEAELGLGTVLAQDGRLLTVLYPATGDTRQYALRNAPLTRVRFSPGDSITHFEGWKMTVQEVDDVDGLLVYHGLNGQHEQVTLPETQLSNFIQFRLASDRLFAGQIDPLAWFSLRYHTLEHTSRQLQSSLWGLGGVRAQPIAHQLHIAREVADRIAPRVLLADEVGLGKTIEAGLVIHRQLLSGRASRVLILVPENLQHQWLVEMRRRFNLQVALFDEERFIESDATNPFEDTQLALVALEWLVDDEKAQDALFAAGWDLLVVDEAHHLVWHEDKASAEYSLVEQLAEVIPGVLLLTATPEQLGQDSHFARLRLLDPNRFHDLHAFRAESENYRPVAEAVQELLDKGRLSPKAHETIQGFLGNEGEALLTAVNDGDTEASARLVRELLDRHGTGRVLFRNTRAAVQGFPERKLHAYPLPNPDEYMELPLGEHAELYPEVSFQSQPDVEEEHRWWRFDPRVEWLIDQLKMLKRTKVLVICAHAETAMDLEDALRVRSGIPATVFHEGMNILERDRAAAYFADEEFGAQVLICSEIGSEGRNFQFSHHLVLFDLPSHPDLLEQRIGRLDRIGQKHVIELHVPYLETSPQERLFQWYHEALNAFLNTCPTGNALQHQFGPRLLPLLENADDGEWQALIDEARAERERLEQELHTGRDRLLELNSGGAGEGDALVEDILEQDDQFALPIYMETLFDAFGIDSEDHSENALILKPSEKMLDASFPLGDDEGVTITYDRNQALSREDMQFITWEHPMVQGGMDLVLSGSMGNTAVALIKNKALKPGTVLLELLYVSEVVAPRSLQLGRYLPPAALRCLLDANGNDLSGRVTFETLNDQLESVPRASANKFIQAQRDQLTPRINAGEEKITPRHAERVAEAKRRLAADTDEELARLTALQAVNPTVRDSELVALRTQREQGLAMLDKAALRLEAIRVLVAG</sequence>
<keyword id="KW-0010">Activator</keyword>
<keyword id="KW-0067">ATP-binding</keyword>
<keyword id="KW-0238">DNA-binding</keyword>
<keyword id="KW-0347">Helicase</keyword>
<keyword id="KW-0378">Hydrolase</keyword>
<keyword id="KW-0547">Nucleotide-binding</keyword>
<keyword id="KW-0804">Transcription</keyword>
<keyword id="KW-0805">Transcription regulation</keyword>
<feature type="chain" id="PRO_1000216058" description="RNA polymerase-associated protein RapA">
    <location>
        <begin position="1"/>
        <end position="948"/>
    </location>
</feature>
<feature type="domain" description="Helicase ATP-binding" evidence="1">
    <location>
        <begin position="164"/>
        <end position="332"/>
    </location>
</feature>
<feature type="domain" description="Helicase C-terminal" evidence="1">
    <location>
        <begin position="473"/>
        <end position="627"/>
    </location>
</feature>
<feature type="short sequence motif" description="DEAH box">
    <location>
        <begin position="278"/>
        <end position="281"/>
    </location>
</feature>
<feature type="binding site" evidence="1">
    <location>
        <begin position="177"/>
        <end position="184"/>
    </location>
    <ligand>
        <name>ATP</name>
        <dbReference type="ChEBI" id="CHEBI:30616"/>
    </ligand>
</feature>
<name>RAPA_PSEFS</name>